<comment type="catalytic activity">
    <reaction>
        <text>Hydrolysis of proteins and small molecule substrates at -Asn-|-Xaa- bonds.</text>
        <dbReference type="EC" id="3.4.22.34"/>
    </reaction>
</comment>
<comment type="developmental stage">
    <text>Expressed at the newly excysted juvenile stage.</text>
</comment>
<comment type="similarity">
    <text evidence="1">Belongs to the peptidase C13 family.</text>
</comment>
<accession>P80527</accession>
<name>HGLB1_FASHE</name>
<sequence length="20" mass="2278">KNWAVLVAGSNGWPNYRHHA</sequence>
<reference key="1">
    <citation type="journal article" date="1995" name="Biochem. Biophys. Res. Commun.">
        <title>Fasciola hepatica: rapid identification of newly excysted juvenile proteins.</title>
        <authorList>
            <person name="Tkalcevic J."/>
            <person name="Ashman K."/>
            <person name="Meeusen E."/>
        </authorList>
    </citation>
    <scope>PROTEIN SEQUENCE</scope>
</reference>
<keyword id="KW-0903">Direct protein sequencing</keyword>
<keyword id="KW-0378">Hydrolase</keyword>
<keyword id="KW-0645">Protease</keyword>
<keyword id="KW-0788">Thiol protease</keyword>
<dbReference type="EC" id="3.4.22.34"/>
<dbReference type="MEROPS" id="C13.005"/>
<dbReference type="GO" id="GO:0004197">
    <property type="term" value="F:cysteine-type endopeptidase activity"/>
    <property type="evidence" value="ECO:0007669"/>
    <property type="project" value="UniProtKB-EC"/>
</dbReference>
<dbReference type="GO" id="GO:0006508">
    <property type="term" value="P:proteolysis"/>
    <property type="evidence" value="ECO:0007669"/>
    <property type="project" value="UniProtKB-KW"/>
</dbReference>
<dbReference type="Gene3D" id="3.40.50.1460">
    <property type="match status" value="1"/>
</dbReference>
<dbReference type="InterPro" id="IPR001096">
    <property type="entry name" value="Peptidase_C13"/>
</dbReference>
<dbReference type="Pfam" id="PF01650">
    <property type="entry name" value="Peptidase_C13"/>
    <property type="match status" value="1"/>
</dbReference>
<protein>
    <recommendedName>
        <fullName>Hemoglobinase-like protein 1</fullName>
        <ecNumber>3.4.22.34</ecNumber>
    </recommendedName>
    <alternativeName>
        <fullName>Newly excysted juvenile protein 3</fullName>
    </alternativeName>
</protein>
<feature type="chain" id="PRO_0000215379" description="Hemoglobinase-like protein 1">
    <location>
        <begin position="1"/>
        <end position="20" status="greater than"/>
    </location>
</feature>
<feature type="non-terminal residue">
    <location>
        <position position="20"/>
    </location>
</feature>
<evidence type="ECO:0000305" key="1"/>
<proteinExistence type="evidence at protein level"/>
<organism>
    <name type="scientific">Fasciola hepatica</name>
    <name type="common">Liver fluke</name>
    <dbReference type="NCBI Taxonomy" id="6192"/>
    <lineage>
        <taxon>Eukaryota</taxon>
        <taxon>Metazoa</taxon>
        <taxon>Spiralia</taxon>
        <taxon>Lophotrochozoa</taxon>
        <taxon>Platyhelminthes</taxon>
        <taxon>Trematoda</taxon>
        <taxon>Digenea</taxon>
        <taxon>Plagiorchiida</taxon>
        <taxon>Echinostomata</taxon>
        <taxon>Echinostomatoidea</taxon>
        <taxon>Fasciolidae</taxon>
        <taxon>Fasciola</taxon>
    </lineage>
</organism>